<feature type="signal peptide" evidence="2">
    <location>
        <begin position="1"/>
        <end position="29"/>
    </location>
</feature>
<feature type="chain" id="PRO_0000003899" description="Protocadherin alpha-8">
    <location>
        <begin position="30"/>
        <end position="950"/>
    </location>
</feature>
<feature type="topological domain" description="Extracellular" evidence="2">
    <location>
        <begin position="30"/>
        <end position="697"/>
    </location>
</feature>
<feature type="transmembrane region" description="Helical" evidence="2">
    <location>
        <begin position="698"/>
        <end position="718"/>
    </location>
</feature>
<feature type="topological domain" description="Cytoplasmic" evidence="2">
    <location>
        <begin position="719"/>
        <end position="950"/>
    </location>
</feature>
<feature type="domain" description="Cadherin 1" evidence="3">
    <location>
        <begin position="30"/>
        <end position="133"/>
    </location>
</feature>
<feature type="domain" description="Cadherin 2" evidence="3">
    <location>
        <begin position="157"/>
        <end position="242"/>
    </location>
</feature>
<feature type="domain" description="Cadherin 3" evidence="3">
    <location>
        <begin position="243"/>
        <end position="350"/>
    </location>
</feature>
<feature type="domain" description="Cadherin 4" evidence="3">
    <location>
        <begin position="351"/>
        <end position="455"/>
    </location>
</feature>
<feature type="domain" description="Cadherin 5" evidence="3">
    <location>
        <begin position="456"/>
        <end position="565"/>
    </location>
</feature>
<feature type="domain" description="Cadherin 6" evidence="3">
    <location>
        <begin position="581"/>
        <end position="678"/>
    </location>
</feature>
<feature type="repeat" description="PXXP 1">
    <location>
        <begin position="774"/>
        <end position="777"/>
    </location>
</feature>
<feature type="repeat" description="PXXP 2">
    <location>
        <begin position="799"/>
        <end position="802"/>
    </location>
</feature>
<feature type="repeat" description="PXXP 3">
    <location>
        <begin position="832"/>
        <end position="835"/>
    </location>
</feature>
<feature type="repeat" description="PXXP 4">
    <location>
        <begin position="873"/>
        <end position="876"/>
    </location>
</feature>
<feature type="repeat" description="PXXP 5">
    <location>
        <begin position="891"/>
        <end position="894"/>
    </location>
</feature>
<feature type="region of interest" description="5 X 4 AA repeats of P-X-X-P">
    <location>
        <begin position="774"/>
        <end position="894"/>
    </location>
</feature>
<feature type="region of interest" description="Disordered" evidence="4">
    <location>
        <begin position="831"/>
        <end position="950"/>
    </location>
</feature>
<feature type="compositionally biased region" description="Basic and acidic residues" evidence="4">
    <location>
        <begin position="909"/>
        <end position="923"/>
    </location>
</feature>
<feature type="glycosylation site" description="N-linked (GlcNAc...) asparagine" evidence="2">
    <location>
        <position position="257"/>
    </location>
</feature>
<feature type="glycosylation site" description="N-linked (GlcNAc...) asparagine" evidence="2">
    <location>
        <position position="265"/>
    </location>
</feature>
<feature type="glycosylation site" description="N-linked (GlcNAc...) asparagine" evidence="2">
    <location>
        <position position="548"/>
    </location>
</feature>
<accession>Q5DRE4</accession>
<organism>
    <name type="scientific">Pan troglodytes</name>
    <name type="common">Chimpanzee</name>
    <dbReference type="NCBI Taxonomy" id="9598"/>
    <lineage>
        <taxon>Eukaryota</taxon>
        <taxon>Metazoa</taxon>
        <taxon>Chordata</taxon>
        <taxon>Craniata</taxon>
        <taxon>Vertebrata</taxon>
        <taxon>Euteleostomi</taxon>
        <taxon>Mammalia</taxon>
        <taxon>Eutheria</taxon>
        <taxon>Euarchontoglires</taxon>
        <taxon>Primates</taxon>
        <taxon>Haplorrhini</taxon>
        <taxon>Catarrhini</taxon>
        <taxon>Hominidae</taxon>
        <taxon>Pan</taxon>
    </lineage>
</organism>
<dbReference type="RefSeq" id="NP_001076058.1">
    <property type="nucleotide sequence ID" value="NM_001082589.2"/>
</dbReference>
<dbReference type="SMR" id="Q5DRE4"/>
<dbReference type="FunCoup" id="Q5DRE4">
    <property type="interactions" value="30"/>
</dbReference>
<dbReference type="GlyCosmos" id="Q5DRE4">
    <property type="glycosylation" value="3 sites, No reported glycans"/>
</dbReference>
<dbReference type="PaxDb" id="9598-ENSPTRP00000047961"/>
<dbReference type="Ensembl" id="ENSPTRT00000055453.5">
    <property type="protein sequence ID" value="ENSPTRP00000047961.5"/>
    <property type="gene ID" value="ENSPTRG00000017328.7"/>
</dbReference>
<dbReference type="GeneID" id="100034715"/>
<dbReference type="KEGG" id="ptr:100034715"/>
<dbReference type="CTD" id="56140"/>
<dbReference type="eggNOG" id="KOG3594">
    <property type="taxonomic scope" value="Eukaryota"/>
</dbReference>
<dbReference type="GeneTree" id="ENSGT00940000160554"/>
<dbReference type="InParanoid" id="Q5DRE4"/>
<dbReference type="OMA" id="AKNLECA"/>
<dbReference type="Proteomes" id="UP000002277">
    <property type="component" value="Chromosome 5"/>
</dbReference>
<dbReference type="Bgee" id="ENSPTRG00000017328">
    <property type="expression patterns" value="Expressed in cerebellum and 18 other cell types or tissues"/>
</dbReference>
<dbReference type="GO" id="GO:0005886">
    <property type="term" value="C:plasma membrane"/>
    <property type="evidence" value="ECO:0007669"/>
    <property type="project" value="UniProtKB-SubCell"/>
</dbReference>
<dbReference type="GO" id="GO:0005509">
    <property type="term" value="F:calcium ion binding"/>
    <property type="evidence" value="ECO:0007669"/>
    <property type="project" value="InterPro"/>
</dbReference>
<dbReference type="GO" id="GO:0007156">
    <property type="term" value="P:homophilic cell adhesion via plasma membrane adhesion molecules"/>
    <property type="evidence" value="ECO:0007669"/>
    <property type="project" value="InterPro"/>
</dbReference>
<dbReference type="GO" id="GO:0007399">
    <property type="term" value="P:nervous system development"/>
    <property type="evidence" value="ECO:0007669"/>
    <property type="project" value="UniProtKB-ARBA"/>
</dbReference>
<dbReference type="CDD" id="cd11304">
    <property type="entry name" value="Cadherin_repeat"/>
    <property type="match status" value="6"/>
</dbReference>
<dbReference type="FunFam" id="2.60.40.60:FF:000001">
    <property type="entry name" value="Protocadherin alpha 2"/>
    <property type="match status" value="1"/>
</dbReference>
<dbReference type="FunFam" id="2.60.40.60:FF:000002">
    <property type="entry name" value="Protocadherin alpha 2"/>
    <property type="match status" value="1"/>
</dbReference>
<dbReference type="FunFam" id="2.60.40.60:FF:000003">
    <property type="entry name" value="Protocadherin alpha 2"/>
    <property type="match status" value="1"/>
</dbReference>
<dbReference type="FunFam" id="2.60.40.60:FF:000006">
    <property type="entry name" value="Protocadherin alpha 2"/>
    <property type="match status" value="1"/>
</dbReference>
<dbReference type="FunFam" id="2.60.40.60:FF:000007">
    <property type="entry name" value="Protocadherin alpha 2"/>
    <property type="match status" value="1"/>
</dbReference>
<dbReference type="FunFam" id="2.60.40.60:FF:000076">
    <property type="entry name" value="Protocadherin alpha 2"/>
    <property type="match status" value="1"/>
</dbReference>
<dbReference type="Gene3D" id="2.60.40.60">
    <property type="entry name" value="Cadherins"/>
    <property type="match status" value="6"/>
</dbReference>
<dbReference type="InterPro" id="IPR002126">
    <property type="entry name" value="Cadherin-like_dom"/>
</dbReference>
<dbReference type="InterPro" id="IPR015919">
    <property type="entry name" value="Cadherin-like_sf"/>
</dbReference>
<dbReference type="InterPro" id="IPR031904">
    <property type="entry name" value="Cadherin_CBD"/>
</dbReference>
<dbReference type="InterPro" id="IPR020894">
    <property type="entry name" value="Cadherin_CS"/>
</dbReference>
<dbReference type="InterPro" id="IPR013164">
    <property type="entry name" value="Cadherin_N"/>
</dbReference>
<dbReference type="InterPro" id="IPR050174">
    <property type="entry name" value="Protocadherin/Cadherin-CA"/>
</dbReference>
<dbReference type="PANTHER" id="PTHR24028">
    <property type="entry name" value="CADHERIN-87A"/>
    <property type="match status" value="1"/>
</dbReference>
<dbReference type="PANTHER" id="PTHR24028:SF305">
    <property type="entry name" value="PROTOCADHERIN ALPHA-6-RELATED"/>
    <property type="match status" value="1"/>
</dbReference>
<dbReference type="Pfam" id="PF00028">
    <property type="entry name" value="Cadherin"/>
    <property type="match status" value="5"/>
</dbReference>
<dbReference type="Pfam" id="PF08266">
    <property type="entry name" value="Cadherin_2"/>
    <property type="match status" value="1"/>
</dbReference>
<dbReference type="Pfam" id="PF15974">
    <property type="entry name" value="Cadherin_tail"/>
    <property type="match status" value="1"/>
</dbReference>
<dbReference type="PRINTS" id="PR00205">
    <property type="entry name" value="CADHERIN"/>
</dbReference>
<dbReference type="SMART" id="SM00112">
    <property type="entry name" value="CA"/>
    <property type="match status" value="6"/>
</dbReference>
<dbReference type="SUPFAM" id="SSF49313">
    <property type="entry name" value="Cadherin-like"/>
    <property type="match status" value="6"/>
</dbReference>
<dbReference type="PROSITE" id="PS00232">
    <property type="entry name" value="CADHERIN_1"/>
    <property type="match status" value="5"/>
</dbReference>
<dbReference type="PROSITE" id="PS50268">
    <property type="entry name" value="CADHERIN_2"/>
    <property type="match status" value="6"/>
</dbReference>
<sequence length="950" mass="103157">MVYHWRGDLGSWRLLLLLLLLAAWKVGSGQLHYSVPEEAKHGTFVGRIAQDLGLELAELVPRLFRVASKRHRDLLEVNLQNGILFVNSRIDREELCGRSAECSIHLEVIVDRPLQVFHVDVEVKDVNDNPPVFRVKEQKLFVSESRMPDSRFPLEGASDADVGANSVLTYRLSFHDYFMLDVNSKNDENKLVELVLRKSLDREDAPAHDLFLTATDGGKPELTGTVQLLVTVLDVNDNAPNFEQSEYEVRIFENADNGTTVIKLNASDRDEGANGAISYSFNSLVETMVIDHFSIDRNTGEIVIRGNLDFEQENFYKIRIDATDKGHPPMAGHCTVLVRILDKNDNVPEIALTSLSLPVREDAQFGTVIALISVNDLDSGANGQVTCSLMPHVPFKLVSTFKNYYSLVLDSALDRESVSAYELVVTARDGGSPSLWATASLSVEVADVNDNAPAFAQPEYTVFVKENNPPGCHIFTVSARDADAQENALVSYSLVERRVGERSLSSYVSVHTESGKVYALQPLDHEELELLQFQVSARDAGVPPLGSNVTLQVFVLDENDNAPALLEPRVGGTGGSASELVPRSVGAGHVVAKVRAVDADSGYNAWLSYELQPAASSPRIPFRVGLYTGEISTTRVLDEADSPRHRLLVLVKDHGEPALTATATVLVSLVESGQAPKASSRQSAGVVGPEAALVDVNVYLIIAICAVSSLLVLTLLLYTALRCSALPTEGGCRAGKPTLVCSSAVGSWSYSQQQSQRVCSGEGPPKTDLMAFSPCLPPDLGSVDVGEERDLNVDHGLKPRQPNPDWRYSASLRAGMHSSVHLEEAGILRAGPGGPDQQWPTVSSATPEPEAGEVSPPVGAGVNSNSWTFKYGPGNPKQSGPGELPDKFIIPGSPAIISIRQEPANSQIDKSDFITFGKKEETKKKKKKKKGNKTQEKKEKGNSTTDNSDQ</sequence>
<protein>
    <recommendedName>
        <fullName>Protocadherin alpha-8</fullName>
        <shortName>PCDH-alpha-8</shortName>
    </recommendedName>
</protein>
<proteinExistence type="inferred from homology"/>
<keyword id="KW-0106">Calcium</keyword>
<keyword id="KW-0130">Cell adhesion</keyword>
<keyword id="KW-1003">Cell membrane</keyword>
<keyword id="KW-0325">Glycoprotein</keyword>
<keyword id="KW-0472">Membrane</keyword>
<keyword id="KW-1185">Reference proteome</keyword>
<keyword id="KW-0677">Repeat</keyword>
<keyword id="KW-0732">Signal</keyword>
<keyword id="KW-0812">Transmembrane</keyword>
<keyword id="KW-1133">Transmembrane helix</keyword>
<evidence type="ECO:0000250" key="1"/>
<evidence type="ECO:0000255" key="2"/>
<evidence type="ECO:0000255" key="3">
    <source>
        <dbReference type="PROSITE-ProRule" id="PRU00043"/>
    </source>
</evidence>
<evidence type="ECO:0000256" key="4">
    <source>
        <dbReference type="SAM" id="MobiDB-lite"/>
    </source>
</evidence>
<reference key="1">
    <citation type="journal article" date="2005" name="Nature">
        <title>Initial sequence of the chimpanzee genome and comparison with the human genome.</title>
        <authorList>
            <consortium name="Chimpanzee sequencing and analysis consortium"/>
        </authorList>
    </citation>
    <scope>NUCLEOTIDE SEQUENCE [LARGE SCALE GENOMIC DNA]</scope>
</reference>
<reference key="2">
    <citation type="journal article" date="2005" name="Genetics">
        <title>Comparative genomics and diversifying selection of the clustered vertebrate protocadherin genes.</title>
        <authorList>
            <person name="Wu Q."/>
        </authorList>
    </citation>
    <scope>IDENTIFICATION</scope>
</reference>
<comment type="function">
    <text>Potential calcium-dependent cell-adhesion protein. May be involved in the establishment and maintenance of specific neuronal connections in the brain.</text>
</comment>
<comment type="subcellular location">
    <subcellularLocation>
        <location evidence="1">Cell membrane</location>
        <topology evidence="1">Single-pass type I membrane protein</topology>
    </subcellularLocation>
</comment>
<name>PCDA8_PANTR</name>
<gene>
    <name type="primary">PCDHA8</name>
</gene>